<gene>
    <name type="primary">tetR</name>
</gene>
<dbReference type="EMBL" id="M36272">
    <property type="protein sequence ID" value="AAA25677.1"/>
    <property type="molecule type" value="Genomic_DNA"/>
</dbReference>
<dbReference type="PIR" id="A03575">
    <property type="entry name" value="RPECYS"/>
</dbReference>
<dbReference type="SMR" id="P03039"/>
<dbReference type="OMA" id="MYALGRF"/>
<dbReference type="GO" id="GO:0003700">
    <property type="term" value="F:DNA-binding transcription factor activity"/>
    <property type="evidence" value="ECO:0007669"/>
    <property type="project" value="TreeGrafter"/>
</dbReference>
<dbReference type="GO" id="GO:0046872">
    <property type="term" value="F:metal ion binding"/>
    <property type="evidence" value="ECO:0007669"/>
    <property type="project" value="UniProtKB-KW"/>
</dbReference>
<dbReference type="GO" id="GO:0000976">
    <property type="term" value="F:transcription cis-regulatory region binding"/>
    <property type="evidence" value="ECO:0007669"/>
    <property type="project" value="TreeGrafter"/>
</dbReference>
<dbReference type="GO" id="GO:0045892">
    <property type="term" value="P:negative regulation of DNA-templated transcription"/>
    <property type="evidence" value="ECO:0007669"/>
    <property type="project" value="InterPro"/>
</dbReference>
<dbReference type="GO" id="GO:0046677">
    <property type="term" value="P:response to antibiotic"/>
    <property type="evidence" value="ECO:0007669"/>
    <property type="project" value="UniProtKB-KW"/>
</dbReference>
<dbReference type="Gene3D" id="1.10.10.60">
    <property type="entry name" value="Homeodomain-like"/>
    <property type="match status" value="1"/>
</dbReference>
<dbReference type="Gene3D" id="1.10.357.10">
    <property type="entry name" value="Tetracycline Repressor, domain 2"/>
    <property type="match status" value="1"/>
</dbReference>
<dbReference type="InterPro" id="IPR023772">
    <property type="entry name" value="DNA-bd_HTH_TetR-type_CS"/>
</dbReference>
<dbReference type="InterPro" id="IPR009057">
    <property type="entry name" value="Homeodomain-like_sf"/>
</dbReference>
<dbReference type="InterPro" id="IPR050109">
    <property type="entry name" value="HTH-type_TetR-like_transc_reg"/>
</dbReference>
<dbReference type="InterPro" id="IPR001647">
    <property type="entry name" value="HTH_TetR"/>
</dbReference>
<dbReference type="InterPro" id="IPR004111">
    <property type="entry name" value="Repressor_TetR_C"/>
</dbReference>
<dbReference type="InterPro" id="IPR003012">
    <property type="entry name" value="Tet_transcr_reg_TetR"/>
</dbReference>
<dbReference type="InterPro" id="IPR036271">
    <property type="entry name" value="Tet_transcr_reg_TetR-rel_C_sf"/>
</dbReference>
<dbReference type="NCBIfam" id="NF010319">
    <property type="entry name" value="PRK13756.1"/>
    <property type="match status" value="1"/>
</dbReference>
<dbReference type="PANTHER" id="PTHR30055">
    <property type="entry name" value="HTH-TYPE TRANSCRIPTIONAL REGULATOR RUTR"/>
    <property type="match status" value="1"/>
</dbReference>
<dbReference type="PANTHER" id="PTHR30055:SF151">
    <property type="entry name" value="TRANSCRIPTIONAL REGULATORY PROTEIN"/>
    <property type="match status" value="1"/>
</dbReference>
<dbReference type="Pfam" id="PF02909">
    <property type="entry name" value="TetR_C_1"/>
    <property type="match status" value="1"/>
</dbReference>
<dbReference type="Pfam" id="PF00440">
    <property type="entry name" value="TetR_N"/>
    <property type="match status" value="1"/>
</dbReference>
<dbReference type="PRINTS" id="PR00455">
    <property type="entry name" value="HTHTETR"/>
</dbReference>
<dbReference type="PRINTS" id="PR00400">
    <property type="entry name" value="TETREPRESSOR"/>
</dbReference>
<dbReference type="SUPFAM" id="SSF46689">
    <property type="entry name" value="Homeodomain-like"/>
    <property type="match status" value="1"/>
</dbReference>
<dbReference type="SUPFAM" id="SSF48498">
    <property type="entry name" value="Tetracyclin repressor-like, C-terminal domain"/>
    <property type="match status" value="1"/>
</dbReference>
<dbReference type="PROSITE" id="PS01081">
    <property type="entry name" value="HTH_TETR_1"/>
    <property type="match status" value="1"/>
</dbReference>
<dbReference type="PROSITE" id="PS50977">
    <property type="entry name" value="HTH_TETR_2"/>
    <property type="match status" value="1"/>
</dbReference>
<reference key="1">
    <citation type="journal article" date="1985" name="Mol. Biol. Evol.">
        <title>The tetracycline repressor of pSC101.</title>
        <authorList>
            <person name="Brow M.A.D."/>
            <person name="Pesin R."/>
            <person name="Sutcliffe J.G."/>
        </authorList>
    </citation>
    <scope>NUCLEOTIDE SEQUENCE [GENOMIC DNA]</scope>
</reference>
<evidence type="ECO:0000250" key="1">
    <source>
        <dbReference type="UniProtKB" id="P0ACT4"/>
    </source>
</evidence>
<evidence type="ECO:0000255" key="2">
    <source>
        <dbReference type="PROSITE-ProRule" id="PRU00335"/>
    </source>
</evidence>
<geneLocation type="plasmid">
    <name>pSC101</name>
</geneLocation>
<organism>
    <name type="scientific">Escherichia coli</name>
    <dbReference type="NCBI Taxonomy" id="562"/>
    <lineage>
        <taxon>Bacteria</taxon>
        <taxon>Pseudomonadati</taxon>
        <taxon>Pseudomonadota</taxon>
        <taxon>Gammaproteobacteria</taxon>
        <taxon>Enterobacterales</taxon>
        <taxon>Enterobacteriaceae</taxon>
        <taxon>Escherichia</taxon>
    </lineage>
</organism>
<keyword id="KW-0046">Antibiotic resistance</keyword>
<keyword id="KW-0238">DNA-binding</keyword>
<keyword id="KW-0460">Magnesium</keyword>
<keyword id="KW-0479">Metal-binding</keyword>
<keyword id="KW-0614">Plasmid</keyword>
<keyword id="KW-0678">Repressor</keyword>
<keyword id="KW-0804">Transcription</keyword>
<keyword id="KW-0805">Transcription regulation</keyword>
<sequence>MNKLQREAVIRTALELLNDVGMEGLTTRRLAERLGVQQPALYWHFKNKRALLDALAEAMLTINHTHSTPRDDDDWRSFLKGNACSFRRALLAYRDGARIHAGTRPAAPQMEKADAQLRFLCDAGFSAGDATYALMAISYFTVGAVLEQQASEADAEERGEDQLTTSASTMPARLQSAMKIVYEGGPDAAFERGLALIIGGLEKMRLTTNDIEVLKNVDE</sequence>
<accession>P03039</accession>
<comment type="function">
    <text>TetR is the repressor of the tetracycline resistance element; its N-terminal region forms a helix-turn-helix structure and binds DNA. Binding of tetracycline to TetR reduces the repressor affinity for the tetracycline resistance gene (tetA) promoter operator sites.</text>
</comment>
<feature type="chain" id="PRO_0000070614" description="Tetracycline repressor protein class C">
    <location>
        <begin position="1"/>
        <end position="219"/>
    </location>
</feature>
<feature type="domain" description="HTH tetR-type" evidence="2">
    <location>
        <begin position="3"/>
        <end position="63"/>
    </location>
</feature>
<feature type="DNA-binding region" description="H-T-H motif" evidence="2">
    <location>
        <begin position="26"/>
        <end position="45"/>
    </location>
</feature>
<feature type="binding site" evidence="1">
    <location>
        <position position="64"/>
    </location>
    <ligand>
        <name>tetracycline</name>
        <dbReference type="ChEBI" id="CHEBI:77932"/>
    </ligand>
</feature>
<feature type="binding site" evidence="1">
    <location>
        <position position="82"/>
    </location>
    <ligand>
        <name>tetracycline</name>
        <dbReference type="ChEBI" id="CHEBI:77932"/>
    </ligand>
</feature>
<feature type="binding site" evidence="1">
    <location>
        <position position="100"/>
    </location>
    <ligand>
        <name>Mg(2+)</name>
        <dbReference type="ChEBI" id="CHEBI:18420"/>
    </ligand>
</feature>
<protein>
    <recommendedName>
        <fullName>Tetracycline repressor protein class C</fullName>
    </recommendedName>
</protein>
<proteinExistence type="predicted"/>
<name>TETR3_ECOLX</name>